<accession>Q196W9</accession>
<feature type="chain" id="PRO_0000377794" description="Uncharacterized protein 091L">
    <location>
        <begin position="1"/>
        <end position="1096"/>
    </location>
</feature>
<dbReference type="EMBL" id="DQ643392">
    <property type="protein sequence ID" value="ABF82121.1"/>
    <property type="molecule type" value="Genomic_DNA"/>
</dbReference>
<dbReference type="RefSeq" id="YP_654663.1">
    <property type="nucleotide sequence ID" value="NC_008187.1"/>
</dbReference>
<dbReference type="KEGG" id="vg:4156235"/>
<dbReference type="OrthoDB" id="15769at10239"/>
<dbReference type="Proteomes" id="UP000001358">
    <property type="component" value="Genome"/>
</dbReference>
<dbReference type="InterPro" id="IPR045571">
    <property type="entry name" value="DUF5907"/>
</dbReference>
<dbReference type="Pfam" id="PF19264">
    <property type="entry name" value="DUF5907"/>
    <property type="match status" value="4"/>
</dbReference>
<proteinExistence type="inferred from homology"/>
<gene>
    <name type="ORF">IIV3-091L</name>
</gene>
<comment type="similarity">
    <text evidence="1">Belongs to the IIV-6 261R/396L/443R family.</text>
</comment>
<organism>
    <name type="scientific">Invertebrate iridescent virus 3</name>
    <name type="common">IIV-3</name>
    <name type="synonym">Mosquito iridescent virus</name>
    <dbReference type="NCBI Taxonomy" id="345201"/>
    <lineage>
        <taxon>Viruses</taxon>
        <taxon>Varidnaviria</taxon>
        <taxon>Bamfordvirae</taxon>
        <taxon>Nucleocytoviricota</taxon>
        <taxon>Megaviricetes</taxon>
        <taxon>Pimascovirales</taxon>
        <taxon>Iridoviridae</taxon>
        <taxon>Betairidovirinae</taxon>
        <taxon>Chloriridovirus</taxon>
    </lineage>
</organism>
<protein>
    <recommendedName>
        <fullName>Uncharacterized protein 091L</fullName>
    </recommendedName>
</protein>
<keyword id="KW-1185">Reference proteome</keyword>
<name>VF396_IIV3</name>
<evidence type="ECO:0000305" key="1"/>
<sequence>MSNFKFYDPLSELMSGQLGGGSITGDMTVVAPSKISQSEPPTDPTDLVNKQYVDDAISNGAFLPLVGGTLLGKVYQPMDPSAPTELVNKKYVDSVATGGGPVDVYLPLAGGTLTGPAKYASPPTTDDQLVNKQYVDGQVTALGSGPFLPLTGGALTGQVVQPSAPVAANNLVNKQYVDDTITTQISTVTSNQNSTFLPLAGGTVTGPINYASPPTANEQLANKQYVDGQVTALGSGPFLPLAGGTVTGPIVQTAPATAQNHLVTKDYVDGVATVSDATTAAKGVVQLAGDLSGVAAAPTIAAGVVTNAKLANLTGPSHLKGSNETSAAATDISLGPNLTIGGGGVLDVDSSKIPTIPVQVAQGGTGATTLTGYVKGNGTSPLTTVAKIPVQDVNGSVLTVNGSAPDANGNVATALSNVLTGLDANRPTVIPASGTMYVVSGDDPTVNGKSYISNGTNWLTINTASTSNDTRYVLKGGDTMGGDLSFPSTTKLTLDAAPVNATDAVNKQYVDTQMAGATVANATTTAPGIVQLAGDLSGTATVPKIANAVVSNQKLTPGTSGTLKGTDTTGAVADVTLGSGLTISGTTLSVDAASVPKAGSSQFGTVQFNATSGDLEPSGANSGIALVKSGAINNVKLANFSGPSRLKGSSSLSSTPDDISLGTGLTMTGTVLSVDQSTLTNVLPLSGGTMTGPIVQPADPTSDTQLANKKYVDTAIGSVGATKYLALTGGAVTGTIQSPAPTAASDLTNKEYVDNKVTALGSGPFLPLSGGVVTGVVSQAALPTANEDLANKQYVDQKVATVSGGTAASPATTTSLGTIQLGGDLAGVGSEASAPVITSAAITNNKLKPGGSGTLKGTDTAGAISDVILGPSMSMTNGNQLNAAISVLSGSNPNVTAPTDRPSTANVLYLGTDGGVWVWNGTSYVSPTGSSFKFIKSTTKYTIPLTTAPSTSLQLTDYNIAVLPGQTCRASYMIRYQTGDASYGVSFGFSGPVAGDFFFGHSYMLTTNPGIATSINAVSWAITNMTSLLGVTDTSTPSSNLGTTDDNQYATAMITVEFTNNGTASKTLVVLFNRDLSNYPNVTQRVVGGSVEYRMY</sequence>
<reference key="1">
    <citation type="journal article" date="2006" name="J. Virol.">
        <title>Genome of invertebrate iridescent virus type 3 (mosquito iridescent virus).</title>
        <authorList>
            <person name="Delhon G."/>
            <person name="Tulman E.R."/>
            <person name="Afonso C.L."/>
            <person name="Lu Z."/>
            <person name="Becnel J.J."/>
            <person name="Moser B.A."/>
            <person name="Kutish G.F."/>
            <person name="Rock D.L."/>
        </authorList>
    </citation>
    <scope>NUCLEOTIDE SEQUENCE [LARGE SCALE GENOMIC DNA]</scope>
</reference>
<organismHost>
    <name type="scientific">Aedes vexans</name>
    <name type="common">Inland floodwater mosquito</name>
    <name type="synonym">Culex vexans</name>
    <dbReference type="NCBI Taxonomy" id="7163"/>
</organismHost>
<organismHost>
    <name type="scientific">Culex territans</name>
    <dbReference type="NCBI Taxonomy" id="42431"/>
</organismHost>
<organismHost>
    <name type="scientific">Culiseta annulata</name>
    <dbReference type="NCBI Taxonomy" id="332058"/>
</organismHost>
<organismHost>
    <name type="scientific">Ochlerotatus sollicitans</name>
    <name type="common">eastern saltmarsh mosquito</name>
    <dbReference type="NCBI Taxonomy" id="310513"/>
</organismHost>
<organismHost>
    <name type="scientific">Ochlerotatus taeniorhynchus</name>
    <name type="common">Black salt marsh mosquito</name>
    <name type="synonym">Aedes taeniorhynchus</name>
    <dbReference type="NCBI Taxonomy" id="329105"/>
</organismHost>
<organismHost>
    <name type="scientific">Psorophora ferox</name>
    <dbReference type="NCBI Taxonomy" id="7183"/>
</organismHost>